<dbReference type="EMBL" id="CP002105">
    <property type="protein sequence ID" value="ADL12305.1"/>
    <property type="molecule type" value="Genomic_DNA"/>
</dbReference>
<dbReference type="RefSeq" id="WP_013277751.1">
    <property type="nucleotide sequence ID" value="NC_014378.1"/>
</dbReference>
<dbReference type="SMR" id="D9QVP6"/>
<dbReference type="STRING" id="574087.Acear_0766"/>
<dbReference type="KEGG" id="aar:Acear_0766"/>
<dbReference type="eggNOG" id="COG0310">
    <property type="taxonomic scope" value="Bacteria"/>
</dbReference>
<dbReference type="HOGENOM" id="CLU_052508_3_0_9"/>
<dbReference type="OrthoDB" id="9809846at2"/>
<dbReference type="UniPathway" id="UPA00148"/>
<dbReference type="Proteomes" id="UP000001661">
    <property type="component" value="Chromosome"/>
</dbReference>
<dbReference type="GO" id="GO:0043190">
    <property type="term" value="C:ATP-binding cassette (ABC) transporter complex"/>
    <property type="evidence" value="ECO:0007669"/>
    <property type="project" value="InterPro"/>
</dbReference>
<dbReference type="GO" id="GO:0015087">
    <property type="term" value="F:cobalt ion transmembrane transporter activity"/>
    <property type="evidence" value="ECO:0007669"/>
    <property type="project" value="UniProtKB-UniRule"/>
</dbReference>
<dbReference type="GO" id="GO:0009236">
    <property type="term" value="P:cobalamin biosynthetic process"/>
    <property type="evidence" value="ECO:0007669"/>
    <property type="project" value="UniProtKB-UniRule"/>
</dbReference>
<dbReference type="FunFam" id="1.10.1760.20:FF:000001">
    <property type="entry name" value="Cobalt transport protein CbiM"/>
    <property type="match status" value="1"/>
</dbReference>
<dbReference type="Gene3D" id="1.10.1760.20">
    <property type="match status" value="1"/>
</dbReference>
<dbReference type="HAMAP" id="MF_01462">
    <property type="entry name" value="CbiM"/>
    <property type="match status" value="1"/>
</dbReference>
<dbReference type="InterPro" id="IPR018024">
    <property type="entry name" value="CbiM"/>
</dbReference>
<dbReference type="InterPro" id="IPR002751">
    <property type="entry name" value="CbiM/NikMN"/>
</dbReference>
<dbReference type="NCBIfam" id="TIGR00123">
    <property type="entry name" value="cbiM"/>
    <property type="match status" value="1"/>
</dbReference>
<dbReference type="NCBIfam" id="NF006184">
    <property type="entry name" value="PRK08319.1"/>
    <property type="match status" value="1"/>
</dbReference>
<dbReference type="PANTHER" id="PTHR43627">
    <property type="match status" value="1"/>
</dbReference>
<dbReference type="PANTHER" id="PTHR43627:SF1">
    <property type="entry name" value="COBALT TRANSPORT PROTEIN CBIM"/>
    <property type="match status" value="1"/>
</dbReference>
<dbReference type="Pfam" id="PF01891">
    <property type="entry name" value="CbiM"/>
    <property type="match status" value="1"/>
</dbReference>
<feature type="signal peptide" evidence="1">
    <location>
        <begin position="1"/>
        <end position="27"/>
    </location>
</feature>
<feature type="chain" id="PRO_5000618339" description="Cobalt transport protein CbiM">
    <location>
        <begin position="28"/>
        <end position="251"/>
    </location>
</feature>
<feature type="transmembrane region" description="Helical" evidence="1">
    <location>
        <begin position="35"/>
        <end position="55"/>
    </location>
</feature>
<feature type="transmembrane region" description="Helical" evidence="1">
    <location>
        <begin position="66"/>
        <end position="86"/>
    </location>
</feature>
<feature type="transmembrane region" description="Helical" evidence="1">
    <location>
        <begin position="103"/>
        <end position="123"/>
    </location>
</feature>
<feature type="transmembrane region" description="Helical" evidence="1">
    <location>
        <begin position="131"/>
        <end position="151"/>
    </location>
</feature>
<feature type="transmembrane region" description="Helical" evidence="1">
    <location>
        <begin position="166"/>
        <end position="186"/>
    </location>
</feature>
<feature type="transmembrane region" description="Helical" evidence="1">
    <location>
        <begin position="208"/>
        <end position="228"/>
    </location>
</feature>
<sequence length="251" mass="26908">MNKKKNTILIGLYFLVGIMLFPDRIYAMHIAEGFLPVKWAGIWWIAMLPFLALGIKKVKSITQKEGPGIKMLLALAGAFVFVLSSLKLPSLTGSCSHPTGVGLGAILFGPWPMVVLGCIVLIFQAVLLAHGGLTTLGANVFSMAIVGPFVAYGAYRLLKKLNAPNWLSVFTGSALGNLLTYITTATQLAWAFPGKTGFIASLIKFMGVFATTQVPLAVTEGLVTVLIFNLLLEYSEGELKELSVISKGETV</sequence>
<organism>
    <name type="scientific">Acetohalobium arabaticum (strain ATCC 49924 / DSM 5501 / Z-7288)</name>
    <dbReference type="NCBI Taxonomy" id="574087"/>
    <lineage>
        <taxon>Bacteria</taxon>
        <taxon>Bacillati</taxon>
        <taxon>Bacillota</taxon>
        <taxon>Clostridia</taxon>
        <taxon>Halanaerobiales</taxon>
        <taxon>Halobacteroidaceae</taxon>
        <taxon>Acetohalobium</taxon>
    </lineage>
</organism>
<evidence type="ECO:0000255" key="1">
    <source>
        <dbReference type="HAMAP-Rule" id="MF_01462"/>
    </source>
</evidence>
<protein>
    <recommendedName>
        <fullName evidence="1">Cobalt transport protein CbiM</fullName>
    </recommendedName>
    <alternativeName>
        <fullName evidence="1">Energy-coupling factor transporter probable substrate-capture protein CbiM</fullName>
        <shortName evidence="1">ECF transporter S component CbiM</shortName>
    </alternativeName>
</protein>
<name>CBIM_ACEAZ</name>
<comment type="function">
    <text evidence="1">Part of the energy-coupling factor (ECF) transporter complex CbiMNOQ involved in cobalt import.</text>
</comment>
<comment type="pathway">
    <text evidence="1">Cofactor biosynthesis; adenosylcobalamin biosynthesis.</text>
</comment>
<comment type="subunit">
    <text evidence="1">Forms an energy-coupling factor (ECF) transporter complex composed of an ATP-binding protein (A component, CbiO), a transmembrane protein (T component, CbiQ) and 2 possible substrate-capture proteins (S components, CbiM and CbiN) of unknown stoichimetry.</text>
</comment>
<comment type="subcellular location">
    <subcellularLocation>
        <location evidence="1">Cell membrane</location>
        <topology evidence="1">Multi-pass membrane protein</topology>
    </subcellularLocation>
</comment>
<comment type="similarity">
    <text evidence="1">Belongs to the CbiM family.</text>
</comment>
<reference key="1">
    <citation type="journal article" date="2010" name="Stand. Genomic Sci.">
        <title>Complete genome sequence of Acetohalobium arabaticum type strain (Z-7288).</title>
        <authorList>
            <person name="Sikorski J."/>
            <person name="Lapidus A."/>
            <person name="Chertkov O."/>
            <person name="Lucas S."/>
            <person name="Copeland A."/>
            <person name="Glavina Del Rio T."/>
            <person name="Nolan M."/>
            <person name="Tice H."/>
            <person name="Cheng J.F."/>
            <person name="Han C."/>
            <person name="Brambilla E."/>
            <person name="Pitluck S."/>
            <person name="Liolios K."/>
            <person name="Ivanova N."/>
            <person name="Mavromatis K."/>
            <person name="Mikhailova N."/>
            <person name="Pati A."/>
            <person name="Bruce D."/>
            <person name="Detter C."/>
            <person name="Tapia R."/>
            <person name="Goodwin L."/>
            <person name="Chen A."/>
            <person name="Palaniappan K."/>
            <person name="Land M."/>
            <person name="Hauser L."/>
            <person name="Chang Y.J."/>
            <person name="Jeffries C.D."/>
            <person name="Rohde M."/>
            <person name="Goker M."/>
            <person name="Spring S."/>
            <person name="Woyke T."/>
            <person name="Bristow J."/>
            <person name="Eisen J.A."/>
            <person name="Markowitz V."/>
            <person name="Hugenholtz P."/>
            <person name="Kyrpides N.C."/>
            <person name="Klenk H.P."/>
        </authorList>
    </citation>
    <scope>NUCLEOTIDE SEQUENCE [LARGE SCALE GENOMIC DNA]</scope>
    <source>
        <strain>ATCC 49924 / DSM 5501 / Z-7288</strain>
    </source>
</reference>
<keyword id="KW-1003">Cell membrane</keyword>
<keyword id="KW-0169">Cobalamin biosynthesis</keyword>
<keyword id="KW-0170">Cobalt</keyword>
<keyword id="KW-0171">Cobalt transport</keyword>
<keyword id="KW-0406">Ion transport</keyword>
<keyword id="KW-0472">Membrane</keyword>
<keyword id="KW-1185">Reference proteome</keyword>
<keyword id="KW-0732">Signal</keyword>
<keyword id="KW-0812">Transmembrane</keyword>
<keyword id="KW-1133">Transmembrane helix</keyword>
<keyword id="KW-0813">Transport</keyword>
<proteinExistence type="inferred from homology"/>
<accession>D9QVP6</accession>
<gene>
    <name evidence="1" type="primary">cbiM</name>
    <name type="ordered locus">Acear_0766</name>
</gene>